<gene>
    <name type="ORF">SPCC417.11c</name>
</gene>
<sequence length="438" mass="48047">MRNMVSEISDLSLAKEKSEAQFIARNPKSNDFHCKACDSLPGGNTRTVLHGAPFPIFIEAGYGSKLRDVDGHEYTDFLNELTAGIYGHSNPVIKKALMQGFDEIGISLGGTTTCELNYAEALKSRFLSIEKIRFCNSGTEANITAIIAARKFTGKRAVIAMHGGYHGGPLSFAHGISPYNMDSQDFILCEYNNSTQFKELVNSSQDIAAVIVEAMQGAGGAIPADKEFMQTIQLECEKNDIVFILDEVMTSRLSPGGLQQIYCLKPDLTTLGKYLGGGLPFGAFGGRADIMSCFDPRLPGSLSHSGTFNNDTLTLTAGYVGLTELYTPEAVKRLNALGDGLRKDIESYCHNTKMSITGLGSIMNIHFTESGRVNSYNDTAGEVIELKDLLWMDLLKEGFWIARRGMITLSLVLTESELEAFKLTIKAWIHRRMSLIRI</sequence>
<name>YC7B_SCHPO</name>
<organism>
    <name type="scientific">Schizosaccharomyces pombe (strain 972 / ATCC 24843)</name>
    <name type="common">Fission yeast</name>
    <dbReference type="NCBI Taxonomy" id="284812"/>
    <lineage>
        <taxon>Eukaryota</taxon>
        <taxon>Fungi</taxon>
        <taxon>Dikarya</taxon>
        <taxon>Ascomycota</taxon>
        <taxon>Taphrinomycotina</taxon>
        <taxon>Schizosaccharomycetes</taxon>
        <taxon>Schizosaccharomycetales</taxon>
        <taxon>Schizosaccharomycetaceae</taxon>
        <taxon>Schizosaccharomyces</taxon>
    </lineage>
</organism>
<accession>O94492</accession>
<dbReference type="EC" id="2.6.-.-"/>
<dbReference type="EMBL" id="CU329672">
    <property type="protein sequence ID" value="CAA22657.2"/>
    <property type="molecule type" value="Genomic_DNA"/>
</dbReference>
<dbReference type="PIR" id="T41346">
    <property type="entry name" value="T41346"/>
</dbReference>
<dbReference type="RefSeq" id="NP_588288.2">
    <property type="nucleotide sequence ID" value="NM_001023278.2"/>
</dbReference>
<dbReference type="SMR" id="O94492"/>
<dbReference type="BioGRID" id="275683">
    <property type="interactions" value="11"/>
</dbReference>
<dbReference type="FunCoup" id="O94492">
    <property type="interactions" value="129"/>
</dbReference>
<dbReference type="STRING" id="284812.O94492"/>
<dbReference type="PaxDb" id="4896-SPCC417.11c.1"/>
<dbReference type="EnsemblFungi" id="SPCC417.11c.1">
    <property type="protein sequence ID" value="SPCC417.11c.1:pep"/>
    <property type="gene ID" value="SPCC417.11c"/>
</dbReference>
<dbReference type="KEGG" id="spo:2539111"/>
<dbReference type="PomBase" id="SPCC417.11c"/>
<dbReference type="VEuPathDB" id="FungiDB:SPCC417.11c"/>
<dbReference type="eggNOG" id="KOG1401">
    <property type="taxonomic scope" value="Eukaryota"/>
</dbReference>
<dbReference type="HOGENOM" id="CLU_016922_1_2_1"/>
<dbReference type="InParanoid" id="O94492"/>
<dbReference type="OMA" id="WGPLIFG"/>
<dbReference type="PRO" id="PR:O94492"/>
<dbReference type="Proteomes" id="UP000002485">
    <property type="component" value="Chromosome III"/>
</dbReference>
<dbReference type="GO" id="GO:0005739">
    <property type="term" value="C:mitochondrion"/>
    <property type="evidence" value="ECO:0007005"/>
    <property type="project" value="PomBase"/>
</dbReference>
<dbReference type="GO" id="GO:0042286">
    <property type="term" value="F:glutamate-1-semialdehyde 2,1-aminomutase activity"/>
    <property type="evidence" value="ECO:0000255"/>
    <property type="project" value="PomBase"/>
</dbReference>
<dbReference type="GO" id="GO:0030170">
    <property type="term" value="F:pyridoxal phosphate binding"/>
    <property type="evidence" value="ECO:0007669"/>
    <property type="project" value="InterPro"/>
</dbReference>
<dbReference type="GO" id="GO:0008483">
    <property type="term" value="F:transaminase activity"/>
    <property type="evidence" value="ECO:0007669"/>
    <property type="project" value="UniProtKB-KW"/>
</dbReference>
<dbReference type="GO" id="GO:0006779">
    <property type="term" value="P:porphyrin-containing compound biosynthetic process"/>
    <property type="evidence" value="ECO:0000255"/>
    <property type="project" value="PomBase"/>
</dbReference>
<dbReference type="Gene3D" id="3.90.1150.10">
    <property type="entry name" value="Aspartate Aminotransferase, domain 1"/>
    <property type="match status" value="1"/>
</dbReference>
<dbReference type="Gene3D" id="3.40.640.10">
    <property type="entry name" value="Type I PLP-dependent aspartate aminotransferase-like (Major domain)"/>
    <property type="match status" value="1"/>
</dbReference>
<dbReference type="InterPro" id="IPR005814">
    <property type="entry name" value="Aminotrans_3"/>
</dbReference>
<dbReference type="InterPro" id="IPR015424">
    <property type="entry name" value="PyrdxlP-dep_Trfase"/>
</dbReference>
<dbReference type="InterPro" id="IPR015421">
    <property type="entry name" value="PyrdxlP-dep_Trfase_major"/>
</dbReference>
<dbReference type="InterPro" id="IPR015422">
    <property type="entry name" value="PyrdxlP-dep_Trfase_small"/>
</dbReference>
<dbReference type="PANTHER" id="PTHR43713">
    <property type="entry name" value="GLUTAMATE-1-SEMIALDEHYDE 2,1-AMINOMUTASE"/>
    <property type="match status" value="1"/>
</dbReference>
<dbReference type="PANTHER" id="PTHR43713:SF3">
    <property type="entry name" value="GLUTAMATE-1-SEMIALDEHYDE 2,1-AMINOMUTASE 1, CHLOROPLASTIC-RELATED"/>
    <property type="match status" value="1"/>
</dbReference>
<dbReference type="Pfam" id="PF00202">
    <property type="entry name" value="Aminotran_3"/>
    <property type="match status" value="1"/>
</dbReference>
<dbReference type="SUPFAM" id="SSF53383">
    <property type="entry name" value="PLP-dependent transferases"/>
    <property type="match status" value="1"/>
</dbReference>
<comment type="cofactor">
    <cofactor evidence="3">
        <name>pyridoxal 5'-phosphate</name>
        <dbReference type="ChEBI" id="CHEBI:597326"/>
    </cofactor>
</comment>
<comment type="subcellular location">
    <subcellularLocation>
        <location evidence="2">Mitochondrion</location>
    </subcellularLocation>
</comment>
<comment type="similarity">
    <text evidence="3">Belongs to the class-III pyridoxal-phosphate-dependent aminotransferase family.</text>
</comment>
<evidence type="ECO:0000250" key="1"/>
<evidence type="ECO:0000269" key="2">
    <source>
    </source>
</evidence>
<evidence type="ECO:0000305" key="3"/>
<reference key="1">
    <citation type="journal article" date="2002" name="Nature">
        <title>The genome sequence of Schizosaccharomyces pombe.</title>
        <authorList>
            <person name="Wood V."/>
            <person name="Gwilliam R."/>
            <person name="Rajandream M.A."/>
            <person name="Lyne M.H."/>
            <person name="Lyne R."/>
            <person name="Stewart A."/>
            <person name="Sgouros J.G."/>
            <person name="Peat N."/>
            <person name="Hayles J."/>
            <person name="Baker S.G."/>
            <person name="Basham D."/>
            <person name="Bowman S."/>
            <person name="Brooks K."/>
            <person name="Brown D."/>
            <person name="Brown S."/>
            <person name="Chillingworth T."/>
            <person name="Churcher C.M."/>
            <person name="Collins M."/>
            <person name="Connor R."/>
            <person name="Cronin A."/>
            <person name="Davis P."/>
            <person name="Feltwell T."/>
            <person name="Fraser A."/>
            <person name="Gentles S."/>
            <person name="Goble A."/>
            <person name="Hamlin N."/>
            <person name="Harris D.E."/>
            <person name="Hidalgo J."/>
            <person name="Hodgson G."/>
            <person name="Holroyd S."/>
            <person name="Hornsby T."/>
            <person name="Howarth S."/>
            <person name="Huckle E.J."/>
            <person name="Hunt S."/>
            <person name="Jagels K."/>
            <person name="James K.D."/>
            <person name="Jones L."/>
            <person name="Jones M."/>
            <person name="Leather S."/>
            <person name="McDonald S."/>
            <person name="McLean J."/>
            <person name="Mooney P."/>
            <person name="Moule S."/>
            <person name="Mungall K.L."/>
            <person name="Murphy L.D."/>
            <person name="Niblett D."/>
            <person name="Odell C."/>
            <person name="Oliver K."/>
            <person name="O'Neil S."/>
            <person name="Pearson D."/>
            <person name="Quail M.A."/>
            <person name="Rabbinowitsch E."/>
            <person name="Rutherford K.M."/>
            <person name="Rutter S."/>
            <person name="Saunders D."/>
            <person name="Seeger K."/>
            <person name="Sharp S."/>
            <person name="Skelton J."/>
            <person name="Simmonds M.N."/>
            <person name="Squares R."/>
            <person name="Squares S."/>
            <person name="Stevens K."/>
            <person name="Taylor K."/>
            <person name="Taylor R.G."/>
            <person name="Tivey A."/>
            <person name="Walsh S.V."/>
            <person name="Warren T."/>
            <person name="Whitehead S."/>
            <person name="Woodward J.R."/>
            <person name="Volckaert G."/>
            <person name="Aert R."/>
            <person name="Robben J."/>
            <person name="Grymonprez B."/>
            <person name="Weltjens I."/>
            <person name="Vanstreels E."/>
            <person name="Rieger M."/>
            <person name="Schaefer M."/>
            <person name="Mueller-Auer S."/>
            <person name="Gabel C."/>
            <person name="Fuchs M."/>
            <person name="Duesterhoeft A."/>
            <person name="Fritzc C."/>
            <person name="Holzer E."/>
            <person name="Moestl D."/>
            <person name="Hilbert H."/>
            <person name="Borzym K."/>
            <person name="Langer I."/>
            <person name="Beck A."/>
            <person name="Lehrach H."/>
            <person name="Reinhardt R."/>
            <person name="Pohl T.M."/>
            <person name="Eger P."/>
            <person name="Zimmermann W."/>
            <person name="Wedler H."/>
            <person name="Wambutt R."/>
            <person name="Purnelle B."/>
            <person name="Goffeau A."/>
            <person name="Cadieu E."/>
            <person name="Dreano S."/>
            <person name="Gloux S."/>
            <person name="Lelaure V."/>
            <person name="Mottier S."/>
            <person name="Galibert F."/>
            <person name="Aves S.J."/>
            <person name="Xiang Z."/>
            <person name="Hunt C."/>
            <person name="Moore K."/>
            <person name="Hurst S.M."/>
            <person name="Lucas M."/>
            <person name="Rochet M."/>
            <person name="Gaillardin C."/>
            <person name="Tallada V.A."/>
            <person name="Garzon A."/>
            <person name="Thode G."/>
            <person name="Daga R.R."/>
            <person name="Cruzado L."/>
            <person name="Jimenez J."/>
            <person name="Sanchez M."/>
            <person name="del Rey F."/>
            <person name="Benito J."/>
            <person name="Dominguez A."/>
            <person name="Revuelta J.L."/>
            <person name="Moreno S."/>
            <person name="Armstrong J."/>
            <person name="Forsburg S.L."/>
            <person name="Cerutti L."/>
            <person name="Lowe T."/>
            <person name="McCombie W.R."/>
            <person name="Paulsen I."/>
            <person name="Potashkin J."/>
            <person name="Shpakovski G.V."/>
            <person name="Ussery D."/>
            <person name="Barrell B.G."/>
            <person name="Nurse P."/>
        </authorList>
    </citation>
    <scope>NUCLEOTIDE SEQUENCE [LARGE SCALE GENOMIC DNA]</scope>
    <source>
        <strain>972 / ATCC 24843</strain>
    </source>
</reference>
<reference key="2">
    <citation type="journal article" date="2011" name="Science">
        <title>Comparative functional genomics of the fission yeasts.</title>
        <authorList>
            <person name="Rhind N."/>
            <person name="Chen Z."/>
            <person name="Yassour M."/>
            <person name="Thompson D.A."/>
            <person name="Haas B.J."/>
            <person name="Habib N."/>
            <person name="Wapinski I."/>
            <person name="Roy S."/>
            <person name="Lin M.F."/>
            <person name="Heiman D.I."/>
            <person name="Young S.K."/>
            <person name="Furuya K."/>
            <person name="Guo Y."/>
            <person name="Pidoux A."/>
            <person name="Chen H.M."/>
            <person name="Robbertse B."/>
            <person name="Goldberg J.M."/>
            <person name="Aoki K."/>
            <person name="Bayne E.H."/>
            <person name="Berlin A.M."/>
            <person name="Desjardins C.A."/>
            <person name="Dobbs E."/>
            <person name="Dukaj L."/>
            <person name="Fan L."/>
            <person name="FitzGerald M.G."/>
            <person name="French C."/>
            <person name="Gujja S."/>
            <person name="Hansen K."/>
            <person name="Keifenheim D."/>
            <person name="Levin J.Z."/>
            <person name="Mosher R.A."/>
            <person name="Mueller C.A."/>
            <person name="Pfiffner J."/>
            <person name="Priest M."/>
            <person name="Russ C."/>
            <person name="Smialowska A."/>
            <person name="Swoboda P."/>
            <person name="Sykes S.M."/>
            <person name="Vaughn M."/>
            <person name="Vengrova S."/>
            <person name="Yoder R."/>
            <person name="Zeng Q."/>
            <person name="Allshire R."/>
            <person name="Baulcombe D."/>
            <person name="Birren B.W."/>
            <person name="Brown W."/>
            <person name="Ekwall K."/>
            <person name="Kellis M."/>
            <person name="Leatherwood J."/>
            <person name="Levin H."/>
            <person name="Margalit H."/>
            <person name="Martienssen R."/>
            <person name="Nieduszynski C.A."/>
            <person name="Spatafora J.W."/>
            <person name="Friedman N."/>
            <person name="Dalgaard J.Z."/>
            <person name="Baumann P."/>
            <person name="Niki H."/>
            <person name="Regev A."/>
            <person name="Nusbaum C."/>
        </authorList>
    </citation>
    <scope>REVISION OF GENE MODEL</scope>
</reference>
<reference key="3">
    <citation type="journal article" date="2006" name="Nat. Biotechnol.">
        <title>ORFeome cloning and global analysis of protein localization in the fission yeast Schizosaccharomyces pombe.</title>
        <authorList>
            <person name="Matsuyama A."/>
            <person name="Arai R."/>
            <person name="Yashiroda Y."/>
            <person name="Shirai A."/>
            <person name="Kamata A."/>
            <person name="Sekido S."/>
            <person name="Kobayashi Y."/>
            <person name="Hashimoto A."/>
            <person name="Hamamoto M."/>
            <person name="Hiraoka Y."/>
            <person name="Horinouchi S."/>
            <person name="Yoshida M."/>
        </authorList>
    </citation>
    <scope>SUBCELLULAR LOCATION [LARGE SCALE ANALYSIS]</scope>
</reference>
<proteinExistence type="inferred from homology"/>
<keyword id="KW-0032">Aminotransferase</keyword>
<keyword id="KW-0496">Mitochondrion</keyword>
<keyword id="KW-0663">Pyridoxal phosphate</keyword>
<keyword id="KW-1185">Reference proteome</keyword>
<keyword id="KW-0808">Transferase</keyword>
<feature type="chain" id="PRO_0000358866" description="Uncharacterized aminotransferase C417.11c">
    <location>
        <begin position="1"/>
        <end position="438"/>
    </location>
</feature>
<feature type="modified residue" description="N6-(pyridoxal phosphate)lysine" evidence="1">
    <location>
        <position position="273"/>
    </location>
</feature>
<protein>
    <recommendedName>
        <fullName>Uncharacterized aminotransferase C417.11c</fullName>
        <ecNumber>2.6.-.-</ecNumber>
    </recommendedName>
</protein>